<comment type="function">
    <text evidence="5">Aerial growth, conidiation, and dispersal of filamentous fungi in the environment rely upon a capability of their secreting small amphipathic proteins called hydrophobins (HPBs) with low sequence identity. Class I can self-assemble into an outermost layer of rodlet bundles on aerial cell surfaces, conferring cellular hydrophobicity that supports fungal growth, development and dispersal; whereas Class II form highly ordered films at water-air interfaces through intermolecular interactions but contribute nothing to the rodlet structure.</text>
</comment>
<comment type="subunit">
    <text evidence="1">Self-assembles to form functional amyloid fibrils called rodlets. Self-assembly into fibrillar rodlets occurs spontaneously at hydrophobic:hydrophilic interfaces and the rodlets further associate laterally to form amphipathic monolayers.</text>
</comment>
<comment type="subcellular location">
    <subcellularLocation>
        <location evidence="6">Secreted</location>
    </subcellularLocation>
    <subcellularLocation>
        <location evidence="6">Secreted</location>
        <location evidence="6">Cell wall</location>
    </subcellularLocation>
</comment>
<comment type="similarity">
    <text evidence="5">Belongs to the fungal hydrophobin family.</text>
</comment>
<reference key="1">
    <citation type="journal article" date="2014" name="Proc. Natl. Acad. Sci. U.S.A.">
        <title>Extensive sampling of basidiomycete genomes demonstrates inadequacy of the white-rot/brown-rot paradigm for wood decay fungi.</title>
        <authorList>
            <person name="Riley R."/>
            <person name="Salamov A.A."/>
            <person name="Brown D.W."/>
            <person name="Nagy L.G."/>
            <person name="Floudas D."/>
            <person name="Held B.W."/>
            <person name="Levasseur A."/>
            <person name="Lombard V."/>
            <person name="Morin E."/>
            <person name="Otillar R."/>
            <person name="Lindquist E.A."/>
            <person name="Sun H."/>
            <person name="LaButti K.M."/>
            <person name="Schmutz J."/>
            <person name="Jabbour D."/>
            <person name="Luo H."/>
            <person name="Baker S.E."/>
            <person name="Pisabarro A.G."/>
            <person name="Walton J.D."/>
            <person name="Blanchette R.A."/>
            <person name="Henrissat B."/>
            <person name="Martin F."/>
            <person name="Cullen D."/>
            <person name="Hibbett D.S."/>
            <person name="Grigoriev I.V."/>
        </authorList>
    </citation>
    <scope>NUCLEOTIDE SEQUENCE [LARGE SCALE GENOMIC DNA]</scope>
    <source>
        <strain>PC15</strain>
    </source>
</reference>
<reference key="2">
    <citation type="journal article" date="2021" name="Microbiol. Res.">
        <title>Identification of hydrophobin genes and their physiological functions related to growth and development in Pleurotus ostreatus.</title>
        <authorList>
            <person name="Xu D."/>
            <person name="Wang Y."/>
            <person name="Keerio A.A."/>
            <person name="Ma A."/>
        </authorList>
    </citation>
    <scope>IDENTIFICATION</scope>
</reference>
<accession>A0A067NHW8</accession>
<protein>
    <recommendedName>
        <fullName evidence="4">Class I hydrophobin 15</fullName>
    </recommendedName>
</protein>
<organism>
    <name type="scientific">Pleurotus ostreatus (strain PC15)</name>
    <name type="common">Oyster mushroom</name>
    <dbReference type="NCBI Taxonomy" id="1137138"/>
    <lineage>
        <taxon>Eukaryota</taxon>
        <taxon>Fungi</taxon>
        <taxon>Dikarya</taxon>
        <taxon>Basidiomycota</taxon>
        <taxon>Agaricomycotina</taxon>
        <taxon>Agaricomycetes</taxon>
        <taxon>Agaricomycetidae</taxon>
        <taxon>Agaricales</taxon>
        <taxon>Pleurotineae</taxon>
        <taxon>Pleurotaceae</taxon>
        <taxon>Pleurotus</taxon>
    </lineage>
</organism>
<evidence type="ECO:0000250" key="1">
    <source>
        <dbReference type="UniProtKB" id="Q04571"/>
    </source>
</evidence>
<evidence type="ECO:0000255" key="2"/>
<evidence type="ECO:0000255" key="3">
    <source>
        <dbReference type="PROSITE-ProRule" id="PRU00498"/>
    </source>
</evidence>
<evidence type="ECO:0000303" key="4">
    <source>
    </source>
</evidence>
<evidence type="ECO:0000305" key="5"/>
<evidence type="ECO:0000305" key="6">
    <source>
    </source>
</evidence>
<keyword id="KW-0134">Cell wall</keyword>
<keyword id="KW-1015">Disulfide bond</keyword>
<keyword id="KW-0325">Glycoprotein</keyword>
<keyword id="KW-1185">Reference proteome</keyword>
<keyword id="KW-0964">Secreted</keyword>
<keyword id="KW-0732">Signal</keyword>
<sequence length="135" mass="13469">MFAKSATIAIVLAALAGFSAAVPTADCRTSKTCSSGKVALVAPAAPVGSCSTGKVQCCNSVEHSTQPHVNNLLLGLEHFGLVKGLIGGLTGNVGIQCSPLLLSGNSCTAQTACCENVHFNGLIAVGCSPVNLSLL</sequence>
<dbReference type="EMBL" id="KL198013">
    <property type="protein sequence ID" value="KDQ23321.1"/>
    <property type="molecule type" value="Genomic_DNA"/>
</dbReference>
<dbReference type="STRING" id="1137138.A0A067NHW8"/>
<dbReference type="VEuPathDB" id="FungiDB:PLEOSDRAFT_35044"/>
<dbReference type="HOGENOM" id="CLU_105134_2_0_1"/>
<dbReference type="InParanoid" id="A0A067NHW8"/>
<dbReference type="OrthoDB" id="138913at5338"/>
<dbReference type="Proteomes" id="UP000027073">
    <property type="component" value="Unassembled WGS sequence"/>
</dbReference>
<dbReference type="GO" id="GO:0005576">
    <property type="term" value="C:extracellular region"/>
    <property type="evidence" value="ECO:0007669"/>
    <property type="project" value="UniProtKB-KW"/>
</dbReference>
<dbReference type="GO" id="GO:0009277">
    <property type="term" value="C:fungal-type cell wall"/>
    <property type="evidence" value="ECO:0007669"/>
    <property type="project" value="InterPro"/>
</dbReference>
<dbReference type="GO" id="GO:0005199">
    <property type="term" value="F:structural constituent of cell wall"/>
    <property type="evidence" value="ECO:0007669"/>
    <property type="project" value="InterPro"/>
</dbReference>
<dbReference type="CDD" id="cd23507">
    <property type="entry name" value="hydrophobin_I"/>
    <property type="match status" value="1"/>
</dbReference>
<dbReference type="InterPro" id="IPR001338">
    <property type="entry name" value="Hydrophobin"/>
</dbReference>
<dbReference type="InterPro" id="IPR019778">
    <property type="entry name" value="Hydrophobin_CS"/>
</dbReference>
<dbReference type="Pfam" id="PF01185">
    <property type="entry name" value="Hydrophobin"/>
    <property type="match status" value="1"/>
</dbReference>
<dbReference type="SMART" id="SM00075">
    <property type="entry name" value="HYDRO"/>
    <property type="match status" value="1"/>
</dbReference>
<dbReference type="PROSITE" id="PS00956">
    <property type="entry name" value="HYDROPHOBIN"/>
    <property type="match status" value="1"/>
</dbReference>
<feature type="signal peptide" evidence="2">
    <location>
        <begin position="1"/>
        <end position="21"/>
    </location>
</feature>
<feature type="chain" id="PRO_5013987387" description="Class I hydrophobin 15">
    <location>
        <begin position="22"/>
        <end position="135"/>
    </location>
</feature>
<feature type="glycosylation site" description="N-linked (GlcNAc...) asparagine" evidence="3">
    <location>
        <position position="131"/>
    </location>
</feature>
<feature type="disulfide bond" evidence="1">
    <location>
        <begin position="50"/>
        <end position="113"/>
    </location>
</feature>
<feature type="disulfide bond" evidence="1">
    <location>
        <begin position="57"/>
        <end position="107"/>
    </location>
</feature>
<feature type="disulfide bond" evidence="1">
    <location>
        <begin position="58"/>
        <end position="97"/>
    </location>
</feature>
<feature type="disulfide bond" evidence="1">
    <location>
        <begin position="114"/>
        <end position="127"/>
    </location>
</feature>
<proteinExistence type="inferred from homology"/>
<gene>
    <name evidence="4" type="primary">Hydph15</name>
    <name type="ORF">PLEOSDRAFT_35044</name>
</gene>
<name>HYD15_PLEO1</name>